<evidence type="ECO:0000255" key="1">
    <source>
        <dbReference type="HAMAP-Rule" id="MF_01309"/>
    </source>
</evidence>
<evidence type="ECO:0000256" key="2">
    <source>
        <dbReference type="SAM" id="MobiDB-lite"/>
    </source>
</evidence>
<evidence type="ECO:0000305" key="3"/>
<protein>
    <recommendedName>
        <fullName evidence="1">Small ribosomal subunit protein uS3</fullName>
    </recommendedName>
    <alternativeName>
        <fullName evidence="3">30S ribosomal protein S3</fullName>
    </alternativeName>
</protein>
<organism>
    <name type="scientific">Finegoldia magna (strain ATCC 29328 / DSM 20472 / WAL 2508)</name>
    <name type="common">Peptostreptococcus magnus</name>
    <dbReference type="NCBI Taxonomy" id="334413"/>
    <lineage>
        <taxon>Bacteria</taxon>
        <taxon>Bacillati</taxon>
        <taxon>Bacillota</taxon>
        <taxon>Tissierellia</taxon>
        <taxon>Tissierellales</taxon>
        <taxon>Peptoniphilaceae</taxon>
        <taxon>Finegoldia</taxon>
    </lineage>
</organism>
<reference key="1">
    <citation type="journal article" date="2008" name="DNA Res.">
        <title>Complete genome sequence of Finegoldia magna, an anaerobic opportunistic pathogen.</title>
        <authorList>
            <person name="Goto T."/>
            <person name="Yamashita A."/>
            <person name="Hirakawa H."/>
            <person name="Matsutani M."/>
            <person name="Todo K."/>
            <person name="Ohshima K."/>
            <person name="Toh H."/>
            <person name="Miyamoto K."/>
            <person name="Kuhara S."/>
            <person name="Hattori M."/>
            <person name="Shimizu T."/>
            <person name="Akimoto S."/>
        </authorList>
    </citation>
    <scope>NUCLEOTIDE SEQUENCE [LARGE SCALE GENOMIC DNA]</scope>
    <source>
        <strain>ATCC 29328 / DSM 20472 / WAL 2508</strain>
    </source>
</reference>
<sequence length="244" mass="27327">MGQKVNPKGLRVGVIKDWDSRWFADKKDFGDYLVEDHKIRELIKKESFSAGISSVSIERASNKIKVTINTAKPGMVIGRQGAGVEELKNKLEKLTGKKLIINVEEIKFQDLDAQLVAENIASQLERRISFRRAMKQTMQRSMRAGALGIKTMVSGRLGGADMARSEGYSEGTIPLQTLRAAIDYGFAEADTTYGKLGVKVWLYKGEMLPGMTEEDLPVYKNKKNDKNKKRRNNNRKGKSQAAKN</sequence>
<gene>
    <name evidence="1" type="primary">rpsC</name>
    <name type="ordered locus">FMG_0161</name>
</gene>
<dbReference type="EMBL" id="AP008971">
    <property type="protein sequence ID" value="BAG07579.1"/>
    <property type="molecule type" value="Genomic_DNA"/>
</dbReference>
<dbReference type="RefSeq" id="WP_002837360.1">
    <property type="nucleotide sequence ID" value="NC_010376.1"/>
</dbReference>
<dbReference type="SMR" id="B0RZU6"/>
<dbReference type="STRING" id="334413.FMG_0161"/>
<dbReference type="KEGG" id="fma:FMG_0161"/>
<dbReference type="eggNOG" id="COG0092">
    <property type="taxonomic scope" value="Bacteria"/>
</dbReference>
<dbReference type="HOGENOM" id="CLU_058591_0_2_9"/>
<dbReference type="Proteomes" id="UP000001319">
    <property type="component" value="Chromosome"/>
</dbReference>
<dbReference type="GO" id="GO:0022627">
    <property type="term" value="C:cytosolic small ribosomal subunit"/>
    <property type="evidence" value="ECO:0007669"/>
    <property type="project" value="TreeGrafter"/>
</dbReference>
<dbReference type="GO" id="GO:0003729">
    <property type="term" value="F:mRNA binding"/>
    <property type="evidence" value="ECO:0007669"/>
    <property type="project" value="UniProtKB-UniRule"/>
</dbReference>
<dbReference type="GO" id="GO:0019843">
    <property type="term" value="F:rRNA binding"/>
    <property type="evidence" value="ECO:0007669"/>
    <property type="project" value="UniProtKB-UniRule"/>
</dbReference>
<dbReference type="GO" id="GO:0003735">
    <property type="term" value="F:structural constituent of ribosome"/>
    <property type="evidence" value="ECO:0007669"/>
    <property type="project" value="InterPro"/>
</dbReference>
<dbReference type="GO" id="GO:0006412">
    <property type="term" value="P:translation"/>
    <property type="evidence" value="ECO:0007669"/>
    <property type="project" value="UniProtKB-UniRule"/>
</dbReference>
<dbReference type="CDD" id="cd02412">
    <property type="entry name" value="KH-II_30S_S3"/>
    <property type="match status" value="1"/>
</dbReference>
<dbReference type="FunFam" id="3.30.300.20:FF:000001">
    <property type="entry name" value="30S ribosomal protein S3"/>
    <property type="match status" value="1"/>
</dbReference>
<dbReference type="Gene3D" id="3.30.300.20">
    <property type="match status" value="1"/>
</dbReference>
<dbReference type="Gene3D" id="3.30.1140.32">
    <property type="entry name" value="Ribosomal protein S3, C-terminal domain"/>
    <property type="match status" value="1"/>
</dbReference>
<dbReference type="HAMAP" id="MF_01309_B">
    <property type="entry name" value="Ribosomal_uS3_B"/>
    <property type="match status" value="1"/>
</dbReference>
<dbReference type="InterPro" id="IPR004087">
    <property type="entry name" value="KH_dom"/>
</dbReference>
<dbReference type="InterPro" id="IPR015946">
    <property type="entry name" value="KH_dom-like_a/b"/>
</dbReference>
<dbReference type="InterPro" id="IPR004044">
    <property type="entry name" value="KH_dom_type_2"/>
</dbReference>
<dbReference type="InterPro" id="IPR009019">
    <property type="entry name" value="KH_sf_prok-type"/>
</dbReference>
<dbReference type="InterPro" id="IPR036419">
    <property type="entry name" value="Ribosomal_S3_C_sf"/>
</dbReference>
<dbReference type="InterPro" id="IPR005704">
    <property type="entry name" value="Ribosomal_uS3_bac-typ"/>
</dbReference>
<dbReference type="InterPro" id="IPR001351">
    <property type="entry name" value="Ribosomal_uS3_C"/>
</dbReference>
<dbReference type="InterPro" id="IPR018280">
    <property type="entry name" value="Ribosomal_uS3_CS"/>
</dbReference>
<dbReference type="NCBIfam" id="TIGR01009">
    <property type="entry name" value="rpsC_bact"/>
    <property type="match status" value="1"/>
</dbReference>
<dbReference type="PANTHER" id="PTHR11760">
    <property type="entry name" value="30S/40S RIBOSOMAL PROTEIN S3"/>
    <property type="match status" value="1"/>
</dbReference>
<dbReference type="PANTHER" id="PTHR11760:SF19">
    <property type="entry name" value="SMALL RIBOSOMAL SUBUNIT PROTEIN US3C"/>
    <property type="match status" value="1"/>
</dbReference>
<dbReference type="Pfam" id="PF07650">
    <property type="entry name" value="KH_2"/>
    <property type="match status" value="1"/>
</dbReference>
<dbReference type="Pfam" id="PF00189">
    <property type="entry name" value="Ribosomal_S3_C"/>
    <property type="match status" value="1"/>
</dbReference>
<dbReference type="SMART" id="SM00322">
    <property type="entry name" value="KH"/>
    <property type="match status" value="1"/>
</dbReference>
<dbReference type="SUPFAM" id="SSF54814">
    <property type="entry name" value="Prokaryotic type KH domain (KH-domain type II)"/>
    <property type="match status" value="1"/>
</dbReference>
<dbReference type="SUPFAM" id="SSF54821">
    <property type="entry name" value="Ribosomal protein S3 C-terminal domain"/>
    <property type="match status" value="1"/>
</dbReference>
<dbReference type="PROSITE" id="PS50823">
    <property type="entry name" value="KH_TYPE_2"/>
    <property type="match status" value="1"/>
</dbReference>
<dbReference type="PROSITE" id="PS00548">
    <property type="entry name" value="RIBOSOMAL_S3"/>
    <property type="match status" value="1"/>
</dbReference>
<comment type="function">
    <text evidence="1">Binds the lower part of the 30S subunit head. Binds mRNA in the 70S ribosome, positioning it for translation.</text>
</comment>
<comment type="subunit">
    <text evidence="1">Part of the 30S ribosomal subunit. Forms a tight complex with proteins S10 and S14.</text>
</comment>
<comment type="similarity">
    <text evidence="1">Belongs to the universal ribosomal protein uS3 family.</text>
</comment>
<feature type="chain" id="PRO_1000140971" description="Small ribosomal subunit protein uS3">
    <location>
        <begin position="1"/>
        <end position="244"/>
    </location>
</feature>
<feature type="domain" description="KH type-2" evidence="1">
    <location>
        <begin position="39"/>
        <end position="107"/>
    </location>
</feature>
<feature type="region of interest" description="Disordered" evidence="2">
    <location>
        <begin position="216"/>
        <end position="244"/>
    </location>
</feature>
<feature type="compositionally biased region" description="Basic residues" evidence="2">
    <location>
        <begin position="220"/>
        <end position="238"/>
    </location>
</feature>
<name>RS3_FINM2</name>
<keyword id="KW-1185">Reference proteome</keyword>
<keyword id="KW-0687">Ribonucleoprotein</keyword>
<keyword id="KW-0689">Ribosomal protein</keyword>
<keyword id="KW-0694">RNA-binding</keyword>
<keyword id="KW-0699">rRNA-binding</keyword>
<proteinExistence type="inferred from homology"/>
<accession>B0RZU6</accession>